<protein>
    <recommendedName>
        <fullName evidence="1">Acetylglutamate kinase</fullName>
        <ecNumber evidence="1">2.7.2.8</ecNumber>
    </recommendedName>
    <alternativeName>
        <fullName evidence="1">N-acetyl-L-glutamate 5-phosphotransferase</fullName>
    </alternativeName>
    <alternativeName>
        <fullName evidence="1">NAG kinase</fullName>
        <shortName evidence="1">NAGK</shortName>
    </alternativeName>
</protein>
<comment type="function">
    <text evidence="1">Catalyzes the ATP-dependent phosphorylation of N-acetyl-L-glutamate.</text>
</comment>
<comment type="catalytic activity">
    <reaction evidence="1">
        <text>N-acetyl-L-glutamate + ATP = N-acetyl-L-glutamyl 5-phosphate + ADP</text>
        <dbReference type="Rhea" id="RHEA:14629"/>
        <dbReference type="ChEBI" id="CHEBI:30616"/>
        <dbReference type="ChEBI" id="CHEBI:44337"/>
        <dbReference type="ChEBI" id="CHEBI:57936"/>
        <dbReference type="ChEBI" id="CHEBI:456216"/>
        <dbReference type="EC" id="2.7.2.8"/>
    </reaction>
</comment>
<comment type="pathway">
    <text evidence="1">Amino-acid biosynthesis; L-arginine biosynthesis; N(2)-acetyl-L-ornithine from L-glutamate: step 2/4.</text>
</comment>
<comment type="subcellular location">
    <subcellularLocation>
        <location evidence="1">Cytoplasm</location>
    </subcellularLocation>
</comment>
<comment type="similarity">
    <text evidence="1">Belongs to the acetylglutamate kinase family. ArgB subfamily.</text>
</comment>
<sequence length="282" mass="30436">MKRETVQVLLEALPYIKEFHGKTFVIKFGGSAMKNENAKEAFIKDLVLLKYTGINPVIVHGGGSEISSLMNQLGIEPVFKNGYRITDEKTMEIVEMVLVGKVNKDIVMNINLHGGKAIGVCGKDGELLLAEKETKYGDIGYVGKVKKVDTTLIKGLLVEGYIPVIAPIGFGEDGTSYNINADIVAAEIAKSLEVEKLVLLTDVDGVFKDGKLLPILSSKEAEDLIEKNIVKGGMIPKLQCAISAVNSGVKSVHIINGGVEHALLLEIFSKEGIGTMIKNLEV</sequence>
<reference key="1">
    <citation type="submission" date="2009-06" db="EMBL/GenBank/DDBJ databases">
        <title>Complete sequence of Thermotogales bacterium TBF 19.5.1.</title>
        <authorList>
            <consortium name="US DOE Joint Genome Institute"/>
            <person name="Lucas S."/>
            <person name="Copeland A."/>
            <person name="Lapidus A."/>
            <person name="Glavina del Rio T."/>
            <person name="Tice H."/>
            <person name="Bruce D."/>
            <person name="Goodwin L."/>
            <person name="Pitluck S."/>
            <person name="Chertkov O."/>
            <person name="Brettin T."/>
            <person name="Detter J.C."/>
            <person name="Han C."/>
            <person name="Schmutz J."/>
            <person name="Larimer F."/>
            <person name="Land M."/>
            <person name="Hauser L."/>
            <person name="Kyrpides N."/>
            <person name="Ovchinnikova G."/>
            <person name="Noll K."/>
        </authorList>
    </citation>
    <scope>NUCLEOTIDE SEQUENCE [LARGE SCALE GENOMIC DNA]</scope>
    <source>
        <strain>ATCC BAA-1733 / DSM 21960 / TBF 19.5.1</strain>
    </source>
</reference>
<gene>
    <name evidence="1" type="primary">argB</name>
    <name type="ordered locus">Kole_0096</name>
</gene>
<dbReference type="EC" id="2.7.2.8" evidence="1"/>
<dbReference type="EMBL" id="CP001634">
    <property type="protein sequence ID" value="ACR78824.1"/>
    <property type="molecule type" value="Genomic_DNA"/>
</dbReference>
<dbReference type="RefSeq" id="WP_012744612.1">
    <property type="nucleotide sequence ID" value="NC_012785.1"/>
</dbReference>
<dbReference type="SMR" id="C5CHW9"/>
<dbReference type="STRING" id="521045.Kole_0096"/>
<dbReference type="KEGG" id="kol:Kole_0096"/>
<dbReference type="eggNOG" id="COG0548">
    <property type="taxonomic scope" value="Bacteria"/>
</dbReference>
<dbReference type="HOGENOM" id="CLU_053680_0_0_0"/>
<dbReference type="OrthoDB" id="9803155at2"/>
<dbReference type="UniPathway" id="UPA00068">
    <property type="reaction ID" value="UER00107"/>
</dbReference>
<dbReference type="Proteomes" id="UP000002382">
    <property type="component" value="Chromosome"/>
</dbReference>
<dbReference type="GO" id="GO:0005737">
    <property type="term" value="C:cytoplasm"/>
    <property type="evidence" value="ECO:0007669"/>
    <property type="project" value="UniProtKB-SubCell"/>
</dbReference>
<dbReference type="GO" id="GO:0003991">
    <property type="term" value="F:acetylglutamate kinase activity"/>
    <property type="evidence" value="ECO:0007669"/>
    <property type="project" value="UniProtKB-UniRule"/>
</dbReference>
<dbReference type="GO" id="GO:0005524">
    <property type="term" value="F:ATP binding"/>
    <property type="evidence" value="ECO:0007669"/>
    <property type="project" value="UniProtKB-UniRule"/>
</dbReference>
<dbReference type="GO" id="GO:0042450">
    <property type="term" value="P:arginine biosynthetic process via ornithine"/>
    <property type="evidence" value="ECO:0007669"/>
    <property type="project" value="UniProtKB-UniRule"/>
</dbReference>
<dbReference type="GO" id="GO:0006526">
    <property type="term" value="P:L-arginine biosynthetic process"/>
    <property type="evidence" value="ECO:0007669"/>
    <property type="project" value="UniProtKB-UniPathway"/>
</dbReference>
<dbReference type="CDD" id="cd04250">
    <property type="entry name" value="AAK_NAGK-C"/>
    <property type="match status" value="1"/>
</dbReference>
<dbReference type="FunFam" id="3.40.1160.10:FF:000004">
    <property type="entry name" value="Acetylglutamate kinase"/>
    <property type="match status" value="1"/>
</dbReference>
<dbReference type="Gene3D" id="3.40.1160.10">
    <property type="entry name" value="Acetylglutamate kinase-like"/>
    <property type="match status" value="1"/>
</dbReference>
<dbReference type="HAMAP" id="MF_00082">
    <property type="entry name" value="ArgB"/>
    <property type="match status" value="1"/>
</dbReference>
<dbReference type="InterPro" id="IPR036393">
    <property type="entry name" value="AceGlu_kinase-like_sf"/>
</dbReference>
<dbReference type="InterPro" id="IPR004662">
    <property type="entry name" value="AcgluKinase_fam"/>
</dbReference>
<dbReference type="InterPro" id="IPR037528">
    <property type="entry name" value="ArgB"/>
</dbReference>
<dbReference type="InterPro" id="IPR001048">
    <property type="entry name" value="Asp/Glu/Uridylate_kinase"/>
</dbReference>
<dbReference type="InterPro" id="IPR041727">
    <property type="entry name" value="NAGK-C"/>
</dbReference>
<dbReference type="NCBIfam" id="TIGR00761">
    <property type="entry name" value="argB"/>
    <property type="match status" value="1"/>
</dbReference>
<dbReference type="PANTHER" id="PTHR23342">
    <property type="entry name" value="N-ACETYLGLUTAMATE SYNTHASE"/>
    <property type="match status" value="1"/>
</dbReference>
<dbReference type="PANTHER" id="PTHR23342:SF0">
    <property type="entry name" value="N-ACETYLGLUTAMATE SYNTHASE, MITOCHONDRIAL"/>
    <property type="match status" value="1"/>
</dbReference>
<dbReference type="Pfam" id="PF00696">
    <property type="entry name" value="AA_kinase"/>
    <property type="match status" value="1"/>
</dbReference>
<dbReference type="PIRSF" id="PIRSF000728">
    <property type="entry name" value="NAGK"/>
    <property type="match status" value="1"/>
</dbReference>
<dbReference type="SUPFAM" id="SSF53633">
    <property type="entry name" value="Carbamate kinase-like"/>
    <property type="match status" value="1"/>
</dbReference>
<keyword id="KW-0028">Amino-acid biosynthesis</keyword>
<keyword id="KW-0055">Arginine biosynthesis</keyword>
<keyword id="KW-0067">ATP-binding</keyword>
<keyword id="KW-0963">Cytoplasm</keyword>
<keyword id="KW-0418">Kinase</keyword>
<keyword id="KW-0547">Nucleotide-binding</keyword>
<keyword id="KW-1185">Reference proteome</keyword>
<keyword id="KW-0808">Transferase</keyword>
<accession>C5CHW9</accession>
<organism>
    <name type="scientific">Kosmotoga olearia (strain ATCC BAA-1733 / DSM 21960 / TBF 19.5.1)</name>
    <dbReference type="NCBI Taxonomy" id="521045"/>
    <lineage>
        <taxon>Bacteria</taxon>
        <taxon>Thermotogati</taxon>
        <taxon>Thermotogota</taxon>
        <taxon>Thermotogae</taxon>
        <taxon>Kosmotogales</taxon>
        <taxon>Kosmotogaceae</taxon>
        <taxon>Kosmotoga</taxon>
    </lineage>
</organism>
<name>ARGB_KOSOT</name>
<feature type="chain" id="PRO_1000202564" description="Acetylglutamate kinase">
    <location>
        <begin position="1"/>
        <end position="282"/>
    </location>
</feature>
<feature type="binding site" evidence="1">
    <location>
        <begin position="62"/>
        <end position="63"/>
    </location>
    <ligand>
        <name>substrate</name>
    </ligand>
</feature>
<feature type="binding site" evidence="1">
    <location>
        <position position="84"/>
    </location>
    <ligand>
        <name>substrate</name>
    </ligand>
</feature>
<feature type="binding site" evidence="1">
    <location>
        <position position="178"/>
    </location>
    <ligand>
        <name>substrate</name>
    </ligand>
</feature>
<feature type="site" description="Transition state stabilizer" evidence="1">
    <location>
        <position position="27"/>
    </location>
</feature>
<feature type="site" description="Transition state stabilizer" evidence="1">
    <location>
        <position position="237"/>
    </location>
</feature>
<evidence type="ECO:0000255" key="1">
    <source>
        <dbReference type="HAMAP-Rule" id="MF_00082"/>
    </source>
</evidence>
<proteinExistence type="inferred from homology"/>